<proteinExistence type="evidence at transcript level"/>
<keyword id="KW-0106">Calcium</keyword>
<keyword id="KW-1015">Disulfide bond</keyword>
<keyword id="KW-0348">Hemagglutinin</keyword>
<keyword id="KW-0430">Lectin</keyword>
<keyword id="KW-0479">Metal-binding</keyword>
<keyword id="KW-0964">Secreted</keyword>
<keyword id="KW-0732">Signal</keyword>
<keyword id="KW-0800">Toxin</keyword>
<name>LECM2_PSEPL</name>
<comment type="function">
    <text evidence="1">Mannose-binding lectin which recognizes specific carbohydrate structures and agglutinates a variety of animal cells by binding to cell-surface glycoproteins and glycolipids. May be a calcium-dependent lectin (By similarity).</text>
</comment>
<comment type="subcellular location">
    <subcellularLocation>
        <location evidence="1">Secreted</location>
    </subcellularLocation>
</comment>
<comment type="tissue specificity">
    <text>Expressed by the venom gland.</text>
</comment>
<comment type="similarity">
    <text evidence="4">Belongs to the true venom lectin family.</text>
</comment>
<evidence type="ECO:0000250" key="1"/>
<evidence type="ECO:0000255" key="2"/>
<evidence type="ECO:0000255" key="3">
    <source>
        <dbReference type="PROSITE-ProRule" id="PRU00040"/>
    </source>
</evidence>
<evidence type="ECO:0000305" key="4"/>
<feature type="signal peptide" evidence="2">
    <location>
        <begin position="1"/>
        <end position="23"/>
    </location>
</feature>
<feature type="chain" id="PRO_0000356308" description="C-type lectin lectoxin-Enh2">
    <location>
        <begin position="24"/>
        <end position="111"/>
    </location>
</feature>
<feature type="domain" description="C-type lectin" evidence="3">
    <location>
        <begin position="33"/>
        <end position="108"/>
    </location>
</feature>
<feature type="short sequence motif" description="Mannose-binding">
    <location>
        <begin position="72"/>
        <end position="74"/>
    </location>
</feature>
<feature type="binding site" evidence="1">
    <location>
        <position position="80"/>
    </location>
    <ligand>
        <name>Ca(2+)</name>
        <dbReference type="ChEBI" id="CHEBI:29108"/>
    </ligand>
</feature>
<feature type="binding site" evidence="1">
    <location>
        <position position="95"/>
    </location>
    <ligand>
        <name>Ca(2+)</name>
        <dbReference type="ChEBI" id="CHEBI:29108"/>
    </ligand>
</feature>
<feature type="binding site" evidence="1">
    <location>
        <position position="96"/>
    </location>
    <ligand>
        <name>Ca(2+)</name>
        <dbReference type="ChEBI" id="CHEBI:29108"/>
    </ligand>
</feature>
<feature type="disulfide bond" evidence="3">
    <location>
        <begin position="26"/>
        <end position="37"/>
    </location>
</feature>
<feature type="disulfide bond" evidence="3">
    <location>
        <begin position="82"/>
        <end position="99"/>
    </location>
</feature>
<sequence length="111" mass="12747">MGQFTVVSLGLLAMFLSLSGAKGDNCPASWISRNGVCNKLFPDRKTWLEAEKRTWKWSDRTSTNYFSWNQGEPNNVQDNENCVHLWAPSGYLKWNDEPCASLHPFICQYKL</sequence>
<organism>
    <name type="scientific">Pseudoferania polylepis</name>
    <name type="common">Macleay's water snake</name>
    <name type="synonym">Enhydris polylepis</name>
    <dbReference type="NCBI Taxonomy" id="338839"/>
    <lineage>
        <taxon>Eukaryota</taxon>
        <taxon>Metazoa</taxon>
        <taxon>Chordata</taxon>
        <taxon>Craniata</taxon>
        <taxon>Vertebrata</taxon>
        <taxon>Euteleostomi</taxon>
        <taxon>Lepidosauria</taxon>
        <taxon>Squamata</taxon>
        <taxon>Bifurcata</taxon>
        <taxon>Unidentata</taxon>
        <taxon>Episquamata</taxon>
        <taxon>Toxicofera</taxon>
        <taxon>Serpentes</taxon>
        <taxon>Colubroidea</taxon>
        <taxon>Homalopsidae</taxon>
        <taxon>Pseudoferania</taxon>
    </lineage>
</organism>
<reference key="1">
    <citation type="journal article" date="2008" name="Mol. Cell. Proteomics">
        <title>Evolution of an arsenal: structural and functional diversification of the venom system in the advanced snakes (Caenophidia).</title>
        <authorList>
            <person name="Fry B.G."/>
            <person name="Scheib H."/>
            <person name="van der Weerd L."/>
            <person name="Young B."/>
            <person name="McNaughtan J."/>
            <person name="Ramjan S.F.R."/>
            <person name="Vidal N."/>
            <person name="Poelmann R.E."/>
            <person name="Norman J.A."/>
        </authorList>
    </citation>
    <scope>NUCLEOTIDE SEQUENCE [MRNA]</scope>
    <source>
        <tissue>Venom gland</tissue>
    </source>
</reference>
<accession>A7X3W6</accession>
<dbReference type="EMBL" id="EU029690">
    <property type="protein sequence ID" value="ABU68490.1"/>
    <property type="molecule type" value="mRNA"/>
</dbReference>
<dbReference type="SMR" id="A7X3W6"/>
<dbReference type="GO" id="GO:0005576">
    <property type="term" value="C:extracellular region"/>
    <property type="evidence" value="ECO:0007669"/>
    <property type="project" value="UniProtKB-SubCell"/>
</dbReference>
<dbReference type="GO" id="GO:0030246">
    <property type="term" value="F:carbohydrate binding"/>
    <property type="evidence" value="ECO:0007669"/>
    <property type="project" value="UniProtKB-KW"/>
</dbReference>
<dbReference type="GO" id="GO:0046872">
    <property type="term" value="F:metal ion binding"/>
    <property type="evidence" value="ECO:0007669"/>
    <property type="project" value="UniProtKB-KW"/>
</dbReference>
<dbReference type="GO" id="GO:0090729">
    <property type="term" value="F:toxin activity"/>
    <property type="evidence" value="ECO:0007669"/>
    <property type="project" value="UniProtKB-KW"/>
</dbReference>
<dbReference type="Gene3D" id="3.10.100.10">
    <property type="entry name" value="Mannose-Binding Protein A, subunit A"/>
    <property type="match status" value="1"/>
</dbReference>
<dbReference type="InterPro" id="IPR001304">
    <property type="entry name" value="C-type_lectin-like"/>
</dbReference>
<dbReference type="InterPro" id="IPR016186">
    <property type="entry name" value="C-type_lectin-like/link_sf"/>
</dbReference>
<dbReference type="InterPro" id="IPR050111">
    <property type="entry name" value="C-type_lectin/snaclec_domain"/>
</dbReference>
<dbReference type="InterPro" id="IPR018378">
    <property type="entry name" value="C-type_lectin_CS"/>
</dbReference>
<dbReference type="InterPro" id="IPR016187">
    <property type="entry name" value="CTDL_fold"/>
</dbReference>
<dbReference type="PANTHER" id="PTHR22803">
    <property type="entry name" value="MANNOSE, PHOSPHOLIPASE, LECTIN RECEPTOR RELATED"/>
    <property type="match status" value="1"/>
</dbReference>
<dbReference type="Pfam" id="PF00059">
    <property type="entry name" value="Lectin_C"/>
    <property type="match status" value="1"/>
</dbReference>
<dbReference type="SMART" id="SM00034">
    <property type="entry name" value="CLECT"/>
    <property type="match status" value="1"/>
</dbReference>
<dbReference type="SUPFAM" id="SSF56436">
    <property type="entry name" value="C-type lectin-like"/>
    <property type="match status" value="1"/>
</dbReference>
<dbReference type="PROSITE" id="PS00615">
    <property type="entry name" value="C_TYPE_LECTIN_1"/>
    <property type="match status" value="1"/>
</dbReference>
<dbReference type="PROSITE" id="PS50041">
    <property type="entry name" value="C_TYPE_LECTIN_2"/>
    <property type="match status" value="1"/>
</dbReference>
<protein>
    <recommendedName>
        <fullName>C-type lectin lectoxin-Enh2</fullName>
        <shortName>CTL</shortName>
    </recommendedName>
</protein>